<protein>
    <recommendedName>
        <fullName evidence="1">S-ribosylhomocysteine lyase</fullName>
        <ecNumber evidence="1">4.4.1.21</ecNumber>
    </recommendedName>
    <alternativeName>
        <fullName evidence="1">AI-2 synthesis protein</fullName>
    </alternativeName>
    <alternativeName>
        <fullName evidence="1">Autoinducer-2 production protein LuxS</fullName>
    </alternativeName>
</protein>
<keyword id="KW-0071">Autoinducer synthesis</keyword>
<keyword id="KW-0408">Iron</keyword>
<keyword id="KW-0456">Lyase</keyword>
<keyword id="KW-0479">Metal-binding</keyword>
<keyword id="KW-0673">Quorum sensing</keyword>
<organism>
    <name type="scientific">Yersinia enterocolitica serotype O:8 / biotype 1B (strain NCTC 13174 / 8081)</name>
    <dbReference type="NCBI Taxonomy" id="393305"/>
    <lineage>
        <taxon>Bacteria</taxon>
        <taxon>Pseudomonadati</taxon>
        <taxon>Pseudomonadota</taxon>
        <taxon>Gammaproteobacteria</taxon>
        <taxon>Enterobacterales</taxon>
        <taxon>Yersiniaceae</taxon>
        <taxon>Yersinia</taxon>
    </lineage>
</organism>
<dbReference type="EC" id="4.4.1.21" evidence="1"/>
<dbReference type="EMBL" id="AM286415">
    <property type="protein sequence ID" value="CAL10939.1"/>
    <property type="molecule type" value="Genomic_DNA"/>
</dbReference>
<dbReference type="RefSeq" id="WP_004877244.1">
    <property type="nucleotide sequence ID" value="NC_008800.1"/>
</dbReference>
<dbReference type="RefSeq" id="YP_001005177.1">
    <property type="nucleotide sequence ID" value="NC_008800.1"/>
</dbReference>
<dbReference type="SMR" id="A1JK16"/>
<dbReference type="GeneID" id="93971115"/>
<dbReference type="KEGG" id="yen:YE0839"/>
<dbReference type="PATRIC" id="fig|393305.7.peg.933"/>
<dbReference type="eggNOG" id="COG1854">
    <property type="taxonomic scope" value="Bacteria"/>
</dbReference>
<dbReference type="HOGENOM" id="CLU_107531_2_0_6"/>
<dbReference type="OrthoDB" id="9788129at2"/>
<dbReference type="Proteomes" id="UP000000642">
    <property type="component" value="Chromosome"/>
</dbReference>
<dbReference type="GO" id="GO:0005506">
    <property type="term" value="F:iron ion binding"/>
    <property type="evidence" value="ECO:0007669"/>
    <property type="project" value="InterPro"/>
</dbReference>
<dbReference type="GO" id="GO:0043768">
    <property type="term" value="F:S-ribosylhomocysteine lyase activity"/>
    <property type="evidence" value="ECO:0007669"/>
    <property type="project" value="UniProtKB-UniRule"/>
</dbReference>
<dbReference type="GO" id="GO:0009372">
    <property type="term" value="P:quorum sensing"/>
    <property type="evidence" value="ECO:0007669"/>
    <property type="project" value="UniProtKB-UniRule"/>
</dbReference>
<dbReference type="FunFam" id="3.30.1360.80:FF:000001">
    <property type="entry name" value="S-ribosylhomocysteine lyase"/>
    <property type="match status" value="1"/>
</dbReference>
<dbReference type="Gene3D" id="3.30.1360.80">
    <property type="entry name" value="S-ribosylhomocysteinase (LuxS)"/>
    <property type="match status" value="1"/>
</dbReference>
<dbReference type="HAMAP" id="MF_00091">
    <property type="entry name" value="LuxS"/>
    <property type="match status" value="1"/>
</dbReference>
<dbReference type="InterPro" id="IPR037005">
    <property type="entry name" value="LuxS_sf"/>
</dbReference>
<dbReference type="InterPro" id="IPR011249">
    <property type="entry name" value="Metalloenz_LuxS/M16"/>
</dbReference>
<dbReference type="InterPro" id="IPR003815">
    <property type="entry name" value="S-ribosylhomocysteinase"/>
</dbReference>
<dbReference type="NCBIfam" id="NF002602">
    <property type="entry name" value="PRK02260.1-2"/>
    <property type="match status" value="1"/>
</dbReference>
<dbReference type="PANTHER" id="PTHR35799">
    <property type="entry name" value="S-RIBOSYLHOMOCYSTEINE LYASE"/>
    <property type="match status" value="1"/>
</dbReference>
<dbReference type="PANTHER" id="PTHR35799:SF1">
    <property type="entry name" value="S-RIBOSYLHOMOCYSTEINE LYASE"/>
    <property type="match status" value="1"/>
</dbReference>
<dbReference type="Pfam" id="PF02664">
    <property type="entry name" value="LuxS"/>
    <property type="match status" value="1"/>
</dbReference>
<dbReference type="PIRSF" id="PIRSF006160">
    <property type="entry name" value="AI2"/>
    <property type="match status" value="1"/>
</dbReference>
<dbReference type="PRINTS" id="PR01487">
    <property type="entry name" value="LUXSPROTEIN"/>
</dbReference>
<dbReference type="SUPFAM" id="SSF63411">
    <property type="entry name" value="LuxS/MPP-like metallohydrolase"/>
    <property type="match status" value="1"/>
</dbReference>
<gene>
    <name evidence="1" type="primary">luxS</name>
    <name type="ordered locus">YE0839</name>
</gene>
<proteinExistence type="inferred from homology"/>
<feature type="chain" id="PRO_0000298057" description="S-ribosylhomocysteine lyase">
    <location>
        <begin position="1"/>
        <end position="171"/>
    </location>
</feature>
<feature type="binding site" evidence="1">
    <location>
        <position position="54"/>
    </location>
    <ligand>
        <name>Fe cation</name>
        <dbReference type="ChEBI" id="CHEBI:24875"/>
    </ligand>
</feature>
<feature type="binding site" evidence="1">
    <location>
        <position position="58"/>
    </location>
    <ligand>
        <name>Fe cation</name>
        <dbReference type="ChEBI" id="CHEBI:24875"/>
    </ligand>
</feature>
<feature type="binding site" evidence="1">
    <location>
        <position position="128"/>
    </location>
    <ligand>
        <name>Fe cation</name>
        <dbReference type="ChEBI" id="CHEBI:24875"/>
    </ligand>
</feature>
<evidence type="ECO:0000255" key="1">
    <source>
        <dbReference type="HAMAP-Rule" id="MF_00091"/>
    </source>
</evidence>
<sequence length="171" mass="19348">MPLLDSFTVDHTIMKAPAVRVAKTMKTPHGDEITVFDLRFCVPNKEVMPERGIHTLEHLFAGFMRNHLNGNGVEIIDISPMGCRTGFYMSLIGTPDEQRVADAWKAAMADVLKVTDQRKIPELNEYQCGTYHMHSLEEAQEIAKGIIDRGVRINHNEELALPKEKLTELHI</sequence>
<reference key="1">
    <citation type="journal article" date="2006" name="PLoS Genet.">
        <title>The complete genome sequence and comparative genome analysis of the high pathogenicity Yersinia enterocolitica strain 8081.</title>
        <authorList>
            <person name="Thomson N.R."/>
            <person name="Howard S."/>
            <person name="Wren B.W."/>
            <person name="Holden M.T.G."/>
            <person name="Crossman L."/>
            <person name="Challis G.L."/>
            <person name="Churcher C."/>
            <person name="Mungall K."/>
            <person name="Brooks K."/>
            <person name="Chillingworth T."/>
            <person name="Feltwell T."/>
            <person name="Abdellah Z."/>
            <person name="Hauser H."/>
            <person name="Jagels K."/>
            <person name="Maddison M."/>
            <person name="Moule S."/>
            <person name="Sanders M."/>
            <person name="Whitehead S."/>
            <person name="Quail M.A."/>
            <person name="Dougan G."/>
            <person name="Parkhill J."/>
            <person name="Prentice M.B."/>
        </authorList>
    </citation>
    <scope>NUCLEOTIDE SEQUENCE [LARGE SCALE GENOMIC DNA]</scope>
    <source>
        <strain>NCTC 13174 / 8081</strain>
    </source>
</reference>
<comment type="function">
    <text evidence="1">Involved in the synthesis of autoinducer 2 (AI-2) which is secreted by bacteria and is used to communicate both the cell density and the metabolic potential of the environment. The regulation of gene expression in response to changes in cell density is called quorum sensing. Catalyzes the transformation of S-ribosylhomocysteine (RHC) to homocysteine (HC) and 4,5-dihydroxy-2,3-pentadione (DPD).</text>
</comment>
<comment type="catalytic activity">
    <reaction evidence="1">
        <text>S-(5-deoxy-D-ribos-5-yl)-L-homocysteine = (S)-4,5-dihydroxypentane-2,3-dione + L-homocysteine</text>
        <dbReference type="Rhea" id="RHEA:17753"/>
        <dbReference type="ChEBI" id="CHEBI:29484"/>
        <dbReference type="ChEBI" id="CHEBI:58195"/>
        <dbReference type="ChEBI" id="CHEBI:58199"/>
        <dbReference type="EC" id="4.4.1.21"/>
    </reaction>
</comment>
<comment type="cofactor">
    <cofactor evidence="1">
        <name>Fe cation</name>
        <dbReference type="ChEBI" id="CHEBI:24875"/>
    </cofactor>
    <text evidence="1">Binds 1 Fe cation per subunit.</text>
</comment>
<comment type="subunit">
    <text evidence="1">Homodimer.</text>
</comment>
<comment type="similarity">
    <text evidence="1">Belongs to the LuxS family.</text>
</comment>
<accession>A1JK16</accession>
<name>LUXS_YERE8</name>